<keyword id="KW-0067">ATP-binding</keyword>
<keyword id="KW-0963">Cytoplasm</keyword>
<keyword id="KW-0418">Kinase</keyword>
<keyword id="KW-0547">Nucleotide-binding</keyword>
<keyword id="KW-1185">Reference proteome</keyword>
<keyword id="KW-0808">Transferase</keyword>
<reference key="1">
    <citation type="journal article" date="2003" name="J. Bacteriol.">
        <title>Complete genome sequence of the oral pathogenic bacterium Porphyromonas gingivalis strain W83.</title>
        <authorList>
            <person name="Nelson K.E."/>
            <person name="Fleischmann R.D."/>
            <person name="DeBoy R.T."/>
            <person name="Paulsen I.T."/>
            <person name="Fouts D.E."/>
            <person name="Eisen J.A."/>
            <person name="Daugherty S.C."/>
            <person name="Dodson R.J."/>
            <person name="Durkin A.S."/>
            <person name="Gwinn M.L."/>
            <person name="Haft D.H."/>
            <person name="Kolonay J.F."/>
            <person name="Nelson W.C."/>
            <person name="Mason T.M."/>
            <person name="Tallon L."/>
            <person name="Gray J."/>
            <person name="Granger D."/>
            <person name="Tettelin H."/>
            <person name="Dong H."/>
            <person name="Galvin J.L."/>
            <person name="Duncan M.J."/>
            <person name="Dewhirst F.E."/>
            <person name="Fraser C.M."/>
        </authorList>
    </citation>
    <scope>NUCLEOTIDE SEQUENCE [LARGE SCALE GENOMIC DNA]</scope>
    <source>
        <strain>ATCC BAA-308 / W83</strain>
    </source>
</reference>
<dbReference type="EC" id="2.7.4.25" evidence="1"/>
<dbReference type="EMBL" id="AE015924">
    <property type="protein sequence ID" value="AAQ65787.1"/>
    <property type="molecule type" value="Genomic_DNA"/>
</dbReference>
<dbReference type="RefSeq" id="WP_010956080.1">
    <property type="nucleotide sequence ID" value="NC_002950.2"/>
</dbReference>
<dbReference type="SMR" id="Q7MWK7"/>
<dbReference type="STRING" id="242619.PG_0603"/>
<dbReference type="EnsemblBacteria" id="AAQ65787">
    <property type="protein sequence ID" value="AAQ65787"/>
    <property type="gene ID" value="PG_0603"/>
</dbReference>
<dbReference type="KEGG" id="pgi:PG_0603"/>
<dbReference type="eggNOG" id="COG0283">
    <property type="taxonomic scope" value="Bacteria"/>
</dbReference>
<dbReference type="HOGENOM" id="CLU_079959_0_2_10"/>
<dbReference type="BioCyc" id="PGIN242619:G1G02-560-MONOMER"/>
<dbReference type="Proteomes" id="UP000000588">
    <property type="component" value="Chromosome"/>
</dbReference>
<dbReference type="GO" id="GO:0005829">
    <property type="term" value="C:cytosol"/>
    <property type="evidence" value="ECO:0007669"/>
    <property type="project" value="TreeGrafter"/>
</dbReference>
<dbReference type="GO" id="GO:0005524">
    <property type="term" value="F:ATP binding"/>
    <property type="evidence" value="ECO:0007669"/>
    <property type="project" value="UniProtKB-UniRule"/>
</dbReference>
<dbReference type="GO" id="GO:0036430">
    <property type="term" value="F:CMP kinase activity"/>
    <property type="evidence" value="ECO:0007669"/>
    <property type="project" value="RHEA"/>
</dbReference>
<dbReference type="GO" id="GO:0036431">
    <property type="term" value="F:dCMP kinase activity"/>
    <property type="evidence" value="ECO:0007669"/>
    <property type="project" value="RHEA"/>
</dbReference>
<dbReference type="GO" id="GO:0015949">
    <property type="term" value="P:nucleobase-containing small molecule interconversion"/>
    <property type="evidence" value="ECO:0007669"/>
    <property type="project" value="TreeGrafter"/>
</dbReference>
<dbReference type="GO" id="GO:0006220">
    <property type="term" value="P:pyrimidine nucleotide metabolic process"/>
    <property type="evidence" value="ECO:0007669"/>
    <property type="project" value="UniProtKB-UniRule"/>
</dbReference>
<dbReference type="CDD" id="cd02020">
    <property type="entry name" value="CMPK"/>
    <property type="match status" value="1"/>
</dbReference>
<dbReference type="Gene3D" id="3.40.50.300">
    <property type="entry name" value="P-loop containing nucleotide triphosphate hydrolases"/>
    <property type="match status" value="1"/>
</dbReference>
<dbReference type="HAMAP" id="MF_00238">
    <property type="entry name" value="Cytidyl_kinase_type1"/>
    <property type="match status" value="1"/>
</dbReference>
<dbReference type="InterPro" id="IPR003136">
    <property type="entry name" value="Cytidylate_kin"/>
</dbReference>
<dbReference type="InterPro" id="IPR011994">
    <property type="entry name" value="Cytidylate_kinase_dom"/>
</dbReference>
<dbReference type="InterPro" id="IPR027417">
    <property type="entry name" value="P-loop_NTPase"/>
</dbReference>
<dbReference type="NCBIfam" id="TIGR00017">
    <property type="entry name" value="cmk"/>
    <property type="match status" value="1"/>
</dbReference>
<dbReference type="PANTHER" id="PTHR21299:SF2">
    <property type="entry name" value="CYTIDYLATE KINASE"/>
    <property type="match status" value="1"/>
</dbReference>
<dbReference type="PANTHER" id="PTHR21299">
    <property type="entry name" value="CYTIDYLATE KINASE/PANTOATE-BETA-ALANINE LIGASE"/>
    <property type="match status" value="1"/>
</dbReference>
<dbReference type="Pfam" id="PF02224">
    <property type="entry name" value="Cytidylate_kin"/>
    <property type="match status" value="1"/>
</dbReference>
<dbReference type="SUPFAM" id="SSF52540">
    <property type="entry name" value="P-loop containing nucleoside triphosphate hydrolases"/>
    <property type="match status" value="1"/>
</dbReference>
<feature type="chain" id="PRO_0000131954" description="Cytidylate kinase">
    <location>
        <begin position="1"/>
        <end position="231"/>
    </location>
</feature>
<feature type="binding site" evidence="1">
    <location>
        <begin position="11"/>
        <end position="19"/>
    </location>
    <ligand>
        <name>ATP</name>
        <dbReference type="ChEBI" id="CHEBI:30616"/>
    </ligand>
</feature>
<gene>
    <name evidence="1" type="primary">cmk</name>
    <name type="ordered locus">PG_0603</name>
</gene>
<proteinExistence type="inferred from homology"/>
<accession>Q7MWK7</accession>
<comment type="catalytic activity">
    <reaction evidence="1">
        <text>CMP + ATP = CDP + ADP</text>
        <dbReference type="Rhea" id="RHEA:11600"/>
        <dbReference type="ChEBI" id="CHEBI:30616"/>
        <dbReference type="ChEBI" id="CHEBI:58069"/>
        <dbReference type="ChEBI" id="CHEBI:60377"/>
        <dbReference type="ChEBI" id="CHEBI:456216"/>
        <dbReference type="EC" id="2.7.4.25"/>
    </reaction>
</comment>
<comment type="catalytic activity">
    <reaction evidence="1">
        <text>dCMP + ATP = dCDP + ADP</text>
        <dbReference type="Rhea" id="RHEA:25094"/>
        <dbReference type="ChEBI" id="CHEBI:30616"/>
        <dbReference type="ChEBI" id="CHEBI:57566"/>
        <dbReference type="ChEBI" id="CHEBI:58593"/>
        <dbReference type="ChEBI" id="CHEBI:456216"/>
        <dbReference type="EC" id="2.7.4.25"/>
    </reaction>
</comment>
<comment type="subcellular location">
    <subcellularLocation>
        <location evidence="1">Cytoplasm</location>
    </subcellularLocation>
</comment>
<comment type="similarity">
    <text evidence="1">Belongs to the cytidylate kinase family. Type 1 subfamily.</text>
</comment>
<protein>
    <recommendedName>
        <fullName evidence="1">Cytidylate kinase</fullName>
        <shortName evidence="1">CK</shortName>
        <ecNumber evidence="1">2.7.4.25</ecNumber>
    </recommendedName>
    <alternativeName>
        <fullName evidence="1">Cytidine monophosphate kinase</fullName>
        <shortName evidence="1">CMP kinase</shortName>
    </alternativeName>
</protein>
<name>KCY_PORGI</name>
<organism>
    <name type="scientific">Porphyromonas gingivalis (strain ATCC BAA-308 / W83)</name>
    <dbReference type="NCBI Taxonomy" id="242619"/>
    <lineage>
        <taxon>Bacteria</taxon>
        <taxon>Pseudomonadati</taxon>
        <taxon>Bacteroidota</taxon>
        <taxon>Bacteroidia</taxon>
        <taxon>Bacteroidales</taxon>
        <taxon>Porphyromonadaceae</taxon>
        <taxon>Porphyromonas</taxon>
    </lineage>
</organism>
<evidence type="ECO:0000255" key="1">
    <source>
        <dbReference type="HAMAP-Rule" id="MF_00238"/>
    </source>
</evidence>
<sequence length="231" mass="25841">MTDPIIIAIDGHSSCGKSTMAKDLARAIGYIYVDTGAMYRAVTLYSIRRGLWKDGVLDTETLRNEMSDVRITFRLNAETGLPETYLNGENVEQDIRSMEVSAKVSPIATLDFVREAMVREQQAMGKSKGIVMDGRDIGTTVFPEAEMKIFVTALPHVRAQRRLDELRAKGDATTTFDDVLANIEERDRIDSTRAVSPLRQAEDALVLDNSHMTIPQQKAWLLERFQEVTGS</sequence>